<dbReference type="EC" id="6.3.4.16" evidence="1"/>
<dbReference type="EC" id="6.3.5.5" evidence="1"/>
<dbReference type="EMBL" id="CP000921">
    <property type="protein sequence ID" value="ACO22313.1"/>
    <property type="molecule type" value="Genomic_DNA"/>
</dbReference>
<dbReference type="RefSeq" id="WP_001126406.1">
    <property type="nucleotide sequence ID" value="NC_012469.1"/>
</dbReference>
<dbReference type="SMR" id="C1CR31"/>
<dbReference type="KEGG" id="snt:SPT_0952"/>
<dbReference type="HOGENOM" id="CLU_000513_1_2_9"/>
<dbReference type="UniPathway" id="UPA00068">
    <property type="reaction ID" value="UER00171"/>
</dbReference>
<dbReference type="UniPathway" id="UPA00070">
    <property type="reaction ID" value="UER00115"/>
</dbReference>
<dbReference type="GO" id="GO:0005737">
    <property type="term" value="C:cytoplasm"/>
    <property type="evidence" value="ECO:0007669"/>
    <property type="project" value="TreeGrafter"/>
</dbReference>
<dbReference type="GO" id="GO:0005524">
    <property type="term" value="F:ATP binding"/>
    <property type="evidence" value="ECO:0007669"/>
    <property type="project" value="UniProtKB-UniRule"/>
</dbReference>
<dbReference type="GO" id="GO:0004087">
    <property type="term" value="F:carbamoyl-phosphate synthase (ammonia) activity"/>
    <property type="evidence" value="ECO:0007669"/>
    <property type="project" value="RHEA"/>
</dbReference>
<dbReference type="GO" id="GO:0004088">
    <property type="term" value="F:carbamoyl-phosphate synthase (glutamine-hydrolyzing) activity"/>
    <property type="evidence" value="ECO:0007669"/>
    <property type="project" value="UniProtKB-UniRule"/>
</dbReference>
<dbReference type="GO" id="GO:0046872">
    <property type="term" value="F:metal ion binding"/>
    <property type="evidence" value="ECO:0007669"/>
    <property type="project" value="UniProtKB-KW"/>
</dbReference>
<dbReference type="GO" id="GO:0044205">
    <property type="term" value="P:'de novo' UMP biosynthetic process"/>
    <property type="evidence" value="ECO:0007669"/>
    <property type="project" value="UniProtKB-UniRule"/>
</dbReference>
<dbReference type="GO" id="GO:0006541">
    <property type="term" value="P:glutamine metabolic process"/>
    <property type="evidence" value="ECO:0007669"/>
    <property type="project" value="TreeGrafter"/>
</dbReference>
<dbReference type="GO" id="GO:0006526">
    <property type="term" value="P:L-arginine biosynthetic process"/>
    <property type="evidence" value="ECO:0007669"/>
    <property type="project" value="UniProtKB-UniRule"/>
</dbReference>
<dbReference type="CDD" id="cd01424">
    <property type="entry name" value="MGS_CPS_II"/>
    <property type="match status" value="1"/>
</dbReference>
<dbReference type="FunFam" id="1.10.1030.10:FF:000002">
    <property type="entry name" value="Carbamoyl-phosphate synthase large chain"/>
    <property type="match status" value="1"/>
</dbReference>
<dbReference type="FunFam" id="3.30.1490.20:FF:000001">
    <property type="entry name" value="Carbamoyl-phosphate synthase large chain"/>
    <property type="match status" value="1"/>
</dbReference>
<dbReference type="FunFam" id="3.30.470.20:FF:000001">
    <property type="entry name" value="Carbamoyl-phosphate synthase large chain"/>
    <property type="match status" value="1"/>
</dbReference>
<dbReference type="FunFam" id="3.30.470.20:FF:000026">
    <property type="entry name" value="Carbamoyl-phosphate synthase large chain"/>
    <property type="match status" value="1"/>
</dbReference>
<dbReference type="FunFam" id="3.40.50.1380:FF:000017">
    <property type="entry name" value="Carbamoyl-phosphate synthase large chain"/>
    <property type="match status" value="1"/>
</dbReference>
<dbReference type="FunFam" id="3.40.50.20:FF:000001">
    <property type="entry name" value="Carbamoyl-phosphate synthase large chain"/>
    <property type="match status" value="2"/>
</dbReference>
<dbReference type="Gene3D" id="3.40.50.20">
    <property type="match status" value="2"/>
</dbReference>
<dbReference type="Gene3D" id="3.30.1490.20">
    <property type="entry name" value="ATP-grasp fold, A domain"/>
    <property type="match status" value="1"/>
</dbReference>
<dbReference type="Gene3D" id="3.30.470.20">
    <property type="entry name" value="ATP-grasp fold, B domain"/>
    <property type="match status" value="2"/>
</dbReference>
<dbReference type="Gene3D" id="1.10.1030.10">
    <property type="entry name" value="Carbamoyl-phosphate synthetase, large subunit oligomerisation domain"/>
    <property type="match status" value="1"/>
</dbReference>
<dbReference type="Gene3D" id="3.40.50.1380">
    <property type="entry name" value="Methylglyoxal synthase-like domain"/>
    <property type="match status" value="1"/>
</dbReference>
<dbReference type="HAMAP" id="MF_01210_B">
    <property type="entry name" value="CPSase_L_chain_B"/>
    <property type="match status" value="1"/>
</dbReference>
<dbReference type="InterPro" id="IPR011761">
    <property type="entry name" value="ATP-grasp"/>
</dbReference>
<dbReference type="InterPro" id="IPR013815">
    <property type="entry name" value="ATP_grasp_subdomain_1"/>
</dbReference>
<dbReference type="InterPro" id="IPR006275">
    <property type="entry name" value="CarbamoylP_synth_lsu"/>
</dbReference>
<dbReference type="InterPro" id="IPR005480">
    <property type="entry name" value="CarbamoylP_synth_lsu_oligo"/>
</dbReference>
<dbReference type="InterPro" id="IPR036897">
    <property type="entry name" value="CarbamoylP_synth_lsu_oligo_sf"/>
</dbReference>
<dbReference type="InterPro" id="IPR005479">
    <property type="entry name" value="CbamoylP_synth_lsu-like_ATP-bd"/>
</dbReference>
<dbReference type="InterPro" id="IPR005483">
    <property type="entry name" value="CbamoylP_synth_lsu_CPSase_dom"/>
</dbReference>
<dbReference type="InterPro" id="IPR011607">
    <property type="entry name" value="MGS-like_dom"/>
</dbReference>
<dbReference type="InterPro" id="IPR036914">
    <property type="entry name" value="MGS-like_dom_sf"/>
</dbReference>
<dbReference type="InterPro" id="IPR033937">
    <property type="entry name" value="MGS_CPS_CarB"/>
</dbReference>
<dbReference type="InterPro" id="IPR016185">
    <property type="entry name" value="PreATP-grasp_dom_sf"/>
</dbReference>
<dbReference type="NCBIfam" id="TIGR01369">
    <property type="entry name" value="CPSaseII_lrg"/>
    <property type="match status" value="1"/>
</dbReference>
<dbReference type="NCBIfam" id="NF003671">
    <property type="entry name" value="PRK05294.1"/>
    <property type="match status" value="1"/>
</dbReference>
<dbReference type="NCBIfam" id="NF009455">
    <property type="entry name" value="PRK12815.1"/>
    <property type="match status" value="1"/>
</dbReference>
<dbReference type="PANTHER" id="PTHR11405:SF53">
    <property type="entry name" value="CARBAMOYL-PHOSPHATE SYNTHASE [AMMONIA], MITOCHONDRIAL"/>
    <property type="match status" value="1"/>
</dbReference>
<dbReference type="PANTHER" id="PTHR11405">
    <property type="entry name" value="CARBAMOYLTRANSFERASE FAMILY MEMBER"/>
    <property type="match status" value="1"/>
</dbReference>
<dbReference type="Pfam" id="PF02786">
    <property type="entry name" value="CPSase_L_D2"/>
    <property type="match status" value="2"/>
</dbReference>
<dbReference type="Pfam" id="PF02787">
    <property type="entry name" value="CPSase_L_D3"/>
    <property type="match status" value="1"/>
</dbReference>
<dbReference type="Pfam" id="PF02142">
    <property type="entry name" value="MGS"/>
    <property type="match status" value="1"/>
</dbReference>
<dbReference type="PRINTS" id="PR00098">
    <property type="entry name" value="CPSASE"/>
</dbReference>
<dbReference type="SMART" id="SM01096">
    <property type="entry name" value="CPSase_L_D3"/>
    <property type="match status" value="1"/>
</dbReference>
<dbReference type="SMART" id="SM01209">
    <property type="entry name" value="GARS_A"/>
    <property type="match status" value="1"/>
</dbReference>
<dbReference type="SMART" id="SM00851">
    <property type="entry name" value="MGS"/>
    <property type="match status" value="1"/>
</dbReference>
<dbReference type="SUPFAM" id="SSF48108">
    <property type="entry name" value="Carbamoyl phosphate synthetase, large subunit connection domain"/>
    <property type="match status" value="1"/>
</dbReference>
<dbReference type="SUPFAM" id="SSF56059">
    <property type="entry name" value="Glutathione synthetase ATP-binding domain-like"/>
    <property type="match status" value="2"/>
</dbReference>
<dbReference type="SUPFAM" id="SSF52335">
    <property type="entry name" value="Methylglyoxal synthase-like"/>
    <property type="match status" value="1"/>
</dbReference>
<dbReference type="SUPFAM" id="SSF52440">
    <property type="entry name" value="PreATP-grasp domain"/>
    <property type="match status" value="2"/>
</dbReference>
<dbReference type="PROSITE" id="PS50975">
    <property type="entry name" value="ATP_GRASP"/>
    <property type="match status" value="2"/>
</dbReference>
<dbReference type="PROSITE" id="PS00866">
    <property type="entry name" value="CPSASE_1"/>
    <property type="match status" value="2"/>
</dbReference>
<dbReference type="PROSITE" id="PS00867">
    <property type="entry name" value="CPSASE_2"/>
    <property type="match status" value="2"/>
</dbReference>
<dbReference type="PROSITE" id="PS51855">
    <property type="entry name" value="MGS"/>
    <property type="match status" value="1"/>
</dbReference>
<protein>
    <recommendedName>
        <fullName evidence="1">Carbamoyl phosphate synthase large chain</fullName>
        <ecNumber evidence="1">6.3.4.16</ecNumber>
        <ecNumber evidence="1">6.3.5.5</ecNumber>
    </recommendedName>
    <alternativeName>
        <fullName evidence="1">Carbamoyl phosphate synthetase ammonia chain</fullName>
    </alternativeName>
</protein>
<feature type="chain" id="PRO_1000164721" description="Carbamoyl phosphate synthase large chain">
    <location>
        <begin position="1"/>
        <end position="1058"/>
    </location>
</feature>
<feature type="domain" description="ATP-grasp 1" evidence="1">
    <location>
        <begin position="133"/>
        <end position="327"/>
    </location>
</feature>
<feature type="domain" description="ATP-grasp 2" evidence="1">
    <location>
        <begin position="671"/>
        <end position="861"/>
    </location>
</feature>
<feature type="domain" description="MGS-like" evidence="1">
    <location>
        <begin position="930"/>
        <end position="1058"/>
    </location>
</feature>
<feature type="region of interest" description="Carboxyphosphate synthetic domain" evidence="1">
    <location>
        <begin position="1"/>
        <end position="401"/>
    </location>
</feature>
<feature type="region of interest" description="Oligomerization domain" evidence="1">
    <location>
        <begin position="402"/>
        <end position="546"/>
    </location>
</feature>
<feature type="region of interest" description="Carbamoyl phosphate synthetic domain" evidence="1">
    <location>
        <begin position="547"/>
        <end position="929"/>
    </location>
</feature>
<feature type="region of interest" description="Allosteric domain" evidence="1">
    <location>
        <begin position="930"/>
        <end position="1058"/>
    </location>
</feature>
<feature type="binding site" evidence="1">
    <location>
        <position position="129"/>
    </location>
    <ligand>
        <name>ATP</name>
        <dbReference type="ChEBI" id="CHEBI:30616"/>
        <label>1</label>
    </ligand>
</feature>
<feature type="binding site" evidence="1">
    <location>
        <position position="169"/>
    </location>
    <ligand>
        <name>ATP</name>
        <dbReference type="ChEBI" id="CHEBI:30616"/>
        <label>1</label>
    </ligand>
</feature>
<feature type="binding site" evidence="1">
    <location>
        <position position="175"/>
    </location>
    <ligand>
        <name>ATP</name>
        <dbReference type="ChEBI" id="CHEBI:30616"/>
        <label>1</label>
    </ligand>
</feature>
<feature type="binding site" evidence="1">
    <location>
        <position position="176"/>
    </location>
    <ligand>
        <name>ATP</name>
        <dbReference type="ChEBI" id="CHEBI:30616"/>
        <label>1</label>
    </ligand>
</feature>
<feature type="binding site" evidence="1">
    <location>
        <position position="208"/>
    </location>
    <ligand>
        <name>ATP</name>
        <dbReference type="ChEBI" id="CHEBI:30616"/>
        <label>1</label>
    </ligand>
</feature>
<feature type="binding site" evidence="1">
    <location>
        <position position="210"/>
    </location>
    <ligand>
        <name>ATP</name>
        <dbReference type="ChEBI" id="CHEBI:30616"/>
        <label>1</label>
    </ligand>
</feature>
<feature type="binding site" evidence="1">
    <location>
        <position position="215"/>
    </location>
    <ligand>
        <name>ATP</name>
        <dbReference type="ChEBI" id="CHEBI:30616"/>
        <label>1</label>
    </ligand>
</feature>
<feature type="binding site" evidence="1">
    <location>
        <position position="241"/>
    </location>
    <ligand>
        <name>ATP</name>
        <dbReference type="ChEBI" id="CHEBI:30616"/>
        <label>1</label>
    </ligand>
</feature>
<feature type="binding site" evidence="1">
    <location>
        <position position="242"/>
    </location>
    <ligand>
        <name>ATP</name>
        <dbReference type="ChEBI" id="CHEBI:30616"/>
        <label>1</label>
    </ligand>
</feature>
<feature type="binding site" evidence="1">
    <location>
        <position position="243"/>
    </location>
    <ligand>
        <name>ATP</name>
        <dbReference type="ChEBI" id="CHEBI:30616"/>
        <label>1</label>
    </ligand>
</feature>
<feature type="binding site" evidence="1">
    <location>
        <position position="284"/>
    </location>
    <ligand>
        <name>ATP</name>
        <dbReference type="ChEBI" id="CHEBI:30616"/>
        <label>1</label>
    </ligand>
</feature>
<feature type="binding site" evidence="1">
    <location>
        <position position="284"/>
    </location>
    <ligand>
        <name>Mg(2+)</name>
        <dbReference type="ChEBI" id="CHEBI:18420"/>
        <label>1</label>
    </ligand>
</feature>
<feature type="binding site" evidence="1">
    <location>
        <position position="284"/>
    </location>
    <ligand>
        <name>Mn(2+)</name>
        <dbReference type="ChEBI" id="CHEBI:29035"/>
        <label>1</label>
    </ligand>
</feature>
<feature type="binding site" evidence="1">
    <location>
        <position position="298"/>
    </location>
    <ligand>
        <name>ATP</name>
        <dbReference type="ChEBI" id="CHEBI:30616"/>
        <label>1</label>
    </ligand>
</feature>
<feature type="binding site" evidence="1">
    <location>
        <position position="298"/>
    </location>
    <ligand>
        <name>Mg(2+)</name>
        <dbReference type="ChEBI" id="CHEBI:18420"/>
        <label>1</label>
    </ligand>
</feature>
<feature type="binding site" evidence="1">
    <location>
        <position position="298"/>
    </location>
    <ligand>
        <name>Mg(2+)</name>
        <dbReference type="ChEBI" id="CHEBI:18420"/>
        <label>2</label>
    </ligand>
</feature>
<feature type="binding site" evidence="1">
    <location>
        <position position="298"/>
    </location>
    <ligand>
        <name>Mn(2+)</name>
        <dbReference type="ChEBI" id="CHEBI:29035"/>
        <label>1</label>
    </ligand>
</feature>
<feature type="binding site" evidence="1">
    <location>
        <position position="298"/>
    </location>
    <ligand>
        <name>Mn(2+)</name>
        <dbReference type="ChEBI" id="CHEBI:29035"/>
        <label>2</label>
    </ligand>
</feature>
<feature type="binding site" evidence="1">
    <location>
        <position position="300"/>
    </location>
    <ligand>
        <name>Mg(2+)</name>
        <dbReference type="ChEBI" id="CHEBI:18420"/>
        <label>2</label>
    </ligand>
</feature>
<feature type="binding site" evidence="1">
    <location>
        <position position="300"/>
    </location>
    <ligand>
        <name>Mn(2+)</name>
        <dbReference type="ChEBI" id="CHEBI:29035"/>
        <label>2</label>
    </ligand>
</feature>
<feature type="binding site" evidence="1">
    <location>
        <position position="707"/>
    </location>
    <ligand>
        <name>ATP</name>
        <dbReference type="ChEBI" id="CHEBI:30616"/>
        <label>2</label>
    </ligand>
</feature>
<feature type="binding site" evidence="1">
    <location>
        <position position="746"/>
    </location>
    <ligand>
        <name>ATP</name>
        <dbReference type="ChEBI" id="CHEBI:30616"/>
        <label>2</label>
    </ligand>
</feature>
<feature type="binding site" evidence="1">
    <location>
        <position position="748"/>
    </location>
    <ligand>
        <name>ATP</name>
        <dbReference type="ChEBI" id="CHEBI:30616"/>
        <label>2</label>
    </ligand>
</feature>
<feature type="binding site" evidence="1">
    <location>
        <position position="752"/>
    </location>
    <ligand>
        <name>ATP</name>
        <dbReference type="ChEBI" id="CHEBI:30616"/>
        <label>2</label>
    </ligand>
</feature>
<feature type="binding site" evidence="1">
    <location>
        <position position="777"/>
    </location>
    <ligand>
        <name>ATP</name>
        <dbReference type="ChEBI" id="CHEBI:30616"/>
        <label>2</label>
    </ligand>
</feature>
<feature type="binding site" evidence="1">
    <location>
        <position position="778"/>
    </location>
    <ligand>
        <name>ATP</name>
        <dbReference type="ChEBI" id="CHEBI:30616"/>
        <label>2</label>
    </ligand>
</feature>
<feature type="binding site" evidence="1">
    <location>
        <position position="779"/>
    </location>
    <ligand>
        <name>ATP</name>
        <dbReference type="ChEBI" id="CHEBI:30616"/>
        <label>2</label>
    </ligand>
</feature>
<feature type="binding site" evidence="1">
    <location>
        <position position="780"/>
    </location>
    <ligand>
        <name>ATP</name>
        <dbReference type="ChEBI" id="CHEBI:30616"/>
        <label>2</label>
    </ligand>
</feature>
<feature type="binding site" evidence="1">
    <location>
        <position position="820"/>
    </location>
    <ligand>
        <name>ATP</name>
        <dbReference type="ChEBI" id="CHEBI:30616"/>
        <label>2</label>
    </ligand>
</feature>
<feature type="binding site" evidence="1">
    <location>
        <position position="820"/>
    </location>
    <ligand>
        <name>Mg(2+)</name>
        <dbReference type="ChEBI" id="CHEBI:18420"/>
        <label>3</label>
    </ligand>
</feature>
<feature type="binding site" evidence="1">
    <location>
        <position position="820"/>
    </location>
    <ligand>
        <name>Mn(2+)</name>
        <dbReference type="ChEBI" id="CHEBI:29035"/>
        <label>3</label>
    </ligand>
</feature>
<feature type="binding site" evidence="1">
    <location>
        <position position="832"/>
    </location>
    <ligand>
        <name>ATP</name>
        <dbReference type="ChEBI" id="CHEBI:30616"/>
        <label>2</label>
    </ligand>
</feature>
<feature type="binding site" evidence="1">
    <location>
        <position position="832"/>
    </location>
    <ligand>
        <name>Mg(2+)</name>
        <dbReference type="ChEBI" id="CHEBI:18420"/>
        <label>3</label>
    </ligand>
</feature>
<feature type="binding site" evidence="1">
    <location>
        <position position="832"/>
    </location>
    <ligand>
        <name>Mg(2+)</name>
        <dbReference type="ChEBI" id="CHEBI:18420"/>
        <label>4</label>
    </ligand>
</feature>
<feature type="binding site" evidence="1">
    <location>
        <position position="832"/>
    </location>
    <ligand>
        <name>Mn(2+)</name>
        <dbReference type="ChEBI" id="CHEBI:29035"/>
        <label>3</label>
    </ligand>
</feature>
<feature type="binding site" evidence="1">
    <location>
        <position position="832"/>
    </location>
    <ligand>
        <name>Mn(2+)</name>
        <dbReference type="ChEBI" id="CHEBI:29035"/>
        <label>4</label>
    </ligand>
</feature>
<feature type="binding site" evidence="1">
    <location>
        <position position="834"/>
    </location>
    <ligand>
        <name>Mg(2+)</name>
        <dbReference type="ChEBI" id="CHEBI:18420"/>
        <label>4</label>
    </ligand>
</feature>
<feature type="binding site" evidence="1">
    <location>
        <position position="834"/>
    </location>
    <ligand>
        <name>Mn(2+)</name>
        <dbReference type="ChEBI" id="CHEBI:29035"/>
        <label>4</label>
    </ligand>
</feature>
<evidence type="ECO:0000255" key="1">
    <source>
        <dbReference type="HAMAP-Rule" id="MF_01210"/>
    </source>
</evidence>
<proteinExistence type="inferred from homology"/>
<name>CARB_STRZT</name>
<accession>C1CR31</accession>
<gene>
    <name evidence="1" type="primary">carB</name>
    <name type="ordered locus">SPT_0952</name>
</gene>
<keyword id="KW-0028">Amino-acid biosynthesis</keyword>
<keyword id="KW-0055">Arginine biosynthesis</keyword>
<keyword id="KW-0067">ATP-binding</keyword>
<keyword id="KW-0436">Ligase</keyword>
<keyword id="KW-0460">Magnesium</keyword>
<keyword id="KW-0464">Manganese</keyword>
<keyword id="KW-0479">Metal-binding</keyword>
<keyword id="KW-0547">Nucleotide-binding</keyword>
<keyword id="KW-0665">Pyrimidine biosynthesis</keyword>
<keyword id="KW-0677">Repeat</keyword>
<reference key="1">
    <citation type="journal article" date="2010" name="Genome Biol.">
        <title>Structure and dynamics of the pan-genome of Streptococcus pneumoniae and closely related species.</title>
        <authorList>
            <person name="Donati C."/>
            <person name="Hiller N.L."/>
            <person name="Tettelin H."/>
            <person name="Muzzi A."/>
            <person name="Croucher N.J."/>
            <person name="Angiuoli S.V."/>
            <person name="Oggioni M."/>
            <person name="Dunning Hotopp J.C."/>
            <person name="Hu F.Z."/>
            <person name="Riley D.R."/>
            <person name="Covacci A."/>
            <person name="Mitchell T.J."/>
            <person name="Bentley S.D."/>
            <person name="Kilian M."/>
            <person name="Ehrlich G.D."/>
            <person name="Rappuoli R."/>
            <person name="Moxon E.R."/>
            <person name="Masignani V."/>
        </authorList>
    </citation>
    <scope>NUCLEOTIDE SEQUENCE [LARGE SCALE GENOMIC DNA]</scope>
    <source>
        <strain>Taiwan19F-14</strain>
    </source>
</reference>
<comment type="function">
    <text evidence="1">Large subunit of the glutamine-dependent carbamoyl phosphate synthetase (CPSase). CPSase catalyzes the formation of carbamoyl phosphate from the ammonia moiety of glutamine, carbonate, and phosphate donated by ATP, constituting the first step of 2 biosynthetic pathways, one leading to arginine and/or urea and the other to pyrimidine nucleotides. The large subunit (synthetase) binds the substrates ammonia (free or transferred from glutamine from the small subunit), hydrogencarbonate and ATP and carries out an ATP-coupled ligase reaction, activating hydrogencarbonate by forming carboxy phosphate which reacts with ammonia to form carbamoyl phosphate.</text>
</comment>
<comment type="catalytic activity">
    <reaction evidence="1">
        <text>hydrogencarbonate + L-glutamine + 2 ATP + H2O = carbamoyl phosphate + L-glutamate + 2 ADP + phosphate + 2 H(+)</text>
        <dbReference type="Rhea" id="RHEA:18633"/>
        <dbReference type="ChEBI" id="CHEBI:15377"/>
        <dbReference type="ChEBI" id="CHEBI:15378"/>
        <dbReference type="ChEBI" id="CHEBI:17544"/>
        <dbReference type="ChEBI" id="CHEBI:29985"/>
        <dbReference type="ChEBI" id="CHEBI:30616"/>
        <dbReference type="ChEBI" id="CHEBI:43474"/>
        <dbReference type="ChEBI" id="CHEBI:58228"/>
        <dbReference type="ChEBI" id="CHEBI:58359"/>
        <dbReference type="ChEBI" id="CHEBI:456216"/>
        <dbReference type="EC" id="6.3.5.5"/>
    </reaction>
</comment>
<comment type="catalytic activity">
    <molecule>Carbamoyl phosphate synthase large chain</molecule>
    <reaction evidence="1">
        <text>hydrogencarbonate + NH4(+) + 2 ATP = carbamoyl phosphate + 2 ADP + phosphate + 2 H(+)</text>
        <dbReference type="Rhea" id="RHEA:18029"/>
        <dbReference type="ChEBI" id="CHEBI:15378"/>
        <dbReference type="ChEBI" id="CHEBI:17544"/>
        <dbReference type="ChEBI" id="CHEBI:28938"/>
        <dbReference type="ChEBI" id="CHEBI:30616"/>
        <dbReference type="ChEBI" id="CHEBI:43474"/>
        <dbReference type="ChEBI" id="CHEBI:58228"/>
        <dbReference type="ChEBI" id="CHEBI:456216"/>
        <dbReference type="EC" id="6.3.4.16"/>
    </reaction>
</comment>
<comment type="cofactor">
    <cofactor evidence="1">
        <name>Mg(2+)</name>
        <dbReference type="ChEBI" id="CHEBI:18420"/>
    </cofactor>
    <cofactor evidence="1">
        <name>Mn(2+)</name>
        <dbReference type="ChEBI" id="CHEBI:29035"/>
    </cofactor>
    <text evidence="1">Binds 4 Mg(2+) or Mn(2+) ions per subunit.</text>
</comment>
<comment type="pathway">
    <text evidence="1">Amino-acid biosynthesis; L-arginine biosynthesis; carbamoyl phosphate from bicarbonate: step 1/1.</text>
</comment>
<comment type="pathway">
    <text evidence="1">Pyrimidine metabolism; UMP biosynthesis via de novo pathway; (S)-dihydroorotate from bicarbonate: step 1/3.</text>
</comment>
<comment type="subunit">
    <text evidence="1">Composed of two chains; the small (or glutamine) chain promotes the hydrolysis of glutamine to ammonia, which is used by the large (or ammonia) chain to synthesize carbamoyl phosphate. Tetramer of heterodimers (alpha,beta)4.</text>
</comment>
<comment type="domain">
    <text evidence="1">The large subunit is composed of 2 ATP-grasp domains that are involved in binding the 2 ATP molecules needed for carbamoyl phosphate synthesis. The N-terminal ATP-grasp domain (referred to as the carboxyphosphate synthetic component) catalyzes the ATP-dependent phosphorylation of hydrogencarbonate to carboxyphosphate and the subsequent nucleophilic attack by ammonia to form a carbamate intermediate. The C-terminal ATP-grasp domain (referred to as the carbamoyl phosphate synthetic component) then catalyzes the phosphorylation of carbamate with the second ATP to form the end product carbamoyl phosphate. The reactive and unstable enzyme intermediates are sequentially channeled from one active site to the next through the interior of the protein over a distance of at least 96 A.</text>
</comment>
<comment type="similarity">
    <text evidence="1">Belongs to the CarB family.</text>
</comment>
<organism>
    <name type="scientific">Streptococcus pneumoniae (strain Taiwan19F-14)</name>
    <dbReference type="NCBI Taxonomy" id="487213"/>
    <lineage>
        <taxon>Bacteria</taxon>
        <taxon>Bacillati</taxon>
        <taxon>Bacillota</taxon>
        <taxon>Bacilli</taxon>
        <taxon>Lactobacillales</taxon>
        <taxon>Streptococcaceae</taxon>
        <taxon>Streptococcus</taxon>
    </lineage>
</organism>
<sequence length="1058" mass="116059">MPKRTDIQKIMVIGSGPIIIGQAAEFDYAGTQACLSLKEEGYEVVLVNSNPATIMTDKEIADKVYIEPITLEFVTRILRKEGPDALLPTLGGQTGLNMAMELSKNGILDELGVELLGTKLSAIDQAEDRDLFKQLMEELEQPIPESEIVNTVEEAVAFAATIGYPVIVRPAFTLGGTGGGMCANEKELREITENGLKLSPVTQCLIERSIAGFKEIEYEVMRDSADNALVVCNMENFDPVGIHTGDSIVFAPAQTMSDYENQMLRDASLSIIRALKIEGGCNVQLALDPNSFKYYVIEVNPRVSRSSALASKATGYPIAKLAAKIAVGLTLDEVINPVTGSTYAMFEPALDYVVAKIPRFPFDKFEKGERRLGTQMKATGEVMAIGRNIEESLLKACRSLEIGVHHNEIPELAAVSDDALIEKVVKAQDDRLFYVSEAIRRGYTPEEIAELTKIDIFYLDKLLHIFEIEQELGAHPQDLEVLKTAKLNGFSDRKIAELWGTTDDKVRQLRLENKIVPVYKMVDTCAAEFDSETPYFYSTYGWENESIRSDKESVLVLGSGPIRIGQGVEFDYATVHSVKAIQAAGYEAIIMNSNPETVSTDFSVSDKLYFEPLTFEDVMNVIDLEQPKGVIVQFGGQTAINLAEPLAKAGVTILGTQVADLDRAEDRDLFEQALKELDIPQPPGQTATNEEEAALAARKIGFPVLVRPSYVLGGRAMEIVENEEDLRSYMRTAVKASPDHPVLVDSYIVGQECEVDAISDGKNVLIPGIMEHIERAGVHSGDSMAVYPPQTLSQKVQETIADYTKRLAIGLHCLGMMNIQFVIKDEKVYVIEVNPRASRTVPFLSKVTNIPMAQVATKLILGQSLSELGYQNGLYPESTRVHIKAPVFSFTKLAKVDSLLGPEMKSTGEVMGSDATLEKALYKAFEASYLHLPTFGNVVFTIADDAKEEALNLARRFQNIGYGILATEGTAAFFASHGLQAQPVGKIGDDDKDIPSFVRKGRIQAIINTVGTKRTADEDGEQIRRSAIEHGVPLFTALDTANAMLKVLESRSFVTEAI</sequence>